<protein>
    <recommendedName>
        <fullName evidence="1">UPF0298 protein SPD_0651</fullName>
    </recommendedName>
</protein>
<evidence type="ECO:0000255" key="1">
    <source>
        <dbReference type="HAMAP-Rule" id="MF_01126"/>
    </source>
</evidence>
<dbReference type="EMBL" id="CP000410">
    <property type="protein sequence ID" value="ABJ54927.1"/>
    <property type="molecule type" value="Genomic_DNA"/>
</dbReference>
<dbReference type="RefSeq" id="WP_000462126.1">
    <property type="nucleotide sequence ID" value="NZ_JAMLJR010000001.1"/>
</dbReference>
<dbReference type="SMR" id="Q04LF3"/>
<dbReference type="PaxDb" id="373153-SPD_0651"/>
<dbReference type="KEGG" id="spd:SPD_0651"/>
<dbReference type="eggNOG" id="COG4471">
    <property type="taxonomic scope" value="Bacteria"/>
</dbReference>
<dbReference type="HOGENOM" id="CLU_159890_1_0_9"/>
<dbReference type="BioCyc" id="SPNE373153:G1G6V-716-MONOMER"/>
<dbReference type="Proteomes" id="UP000001452">
    <property type="component" value="Chromosome"/>
</dbReference>
<dbReference type="GO" id="GO:0005737">
    <property type="term" value="C:cytoplasm"/>
    <property type="evidence" value="ECO:0007669"/>
    <property type="project" value="UniProtKB-SubCell"/>
</dbReference>
<dbReference type="HAMAP" id="MF_01126">
    <property type="entry name" value="UPF0298"/>
    <property type="match status" value="1"/>
</dbReference>
<dbReference type="InterPro" id="IPR016979">
    <property type="entry name" value="DUF2129"/>
</dbReference>
<dbReference type="NCBIfam" id="NF002631">
    <property type="entry name" value="PRK02302.1"/>
    <property type="match status" value="1"/>
</dbReference>
<dbReference type="Pfam" id="PF09902">
    <property type="entry name" value="DUF2129"/>
    <property type="match status" value="1"/>
</dbReference>
<dbReference type="PIRSF" id="PIRSF031653">
    <property type="entry name" value="UCP031653"/>
    <property type="match status" value="1"/>
</dbReference>
<organism>
    <name type="scientific">Streptococcus pneumoniae serotype 2 (strain D39 / NCTC 7466)</name>
    <dbReference type="NCBI Taxonomy" id="373153"/>
    <lineage>
        <taxon>Bacteria</taxon>
        <taxon>Bacillati</taxon>
        <taxon>Bacillota</taxon>
        <taxon>Bacilli</taxon>
        <taxon>Lactobacillales</taxon>
        <taxon>Streptococcaceae</taxon>
        <taxon>Streptococcus</taxon>
    </lineage>
</organism>
<accession>Q04LF3</accession>
<reference key="1">
    <citation type="journal article" date="2007" name="J. Bacteriol.">
        <title>Genome sequence of Avery's virulent serotype 2 strain D39 of Streptococcus pneumoniae and comparison with that of unencapsulated laboratory strain R6.</title>
        <authorList>
            <person name="Lanie J.A."/>
            <person name="Ng W.-L."/>
            <person name="Kazmierczak K.M."/>
            <person name="Andrzejewski T.M."/>
            <person name="Davidsen T.M."/>
            <person name="Wayne K.J."/>
            <person name="Tettelin H."/>
            <person name="Glass J.I."/>
            <person name="Winkler M.E."/>
        </authorList>
    </citation>
    <scope>NUCLEOTIDE SEQUENCE [LARGE SCALE GENOMIC DNA]</scope>
    <source>
        <strain>D39 / NCTC 7466</strain>
    </source>
</reference>
<keyword id="KW-0963">Cytoplasm</keyword>
<keyword id="KW-1185">Reference proteome</keyword>
<name>Y651_STRP2</name>
<gene>
    <name type="ordered locus">SPD_0651</name>
</gene>
<proteinExistence type="inferred from homology"/>
<feature type="chain" id="PRO_1000065368" description="UPF0298 protein SPD_0651">
    <location>
        <begin position="1"/>
        <end position="82"/>
    </location>
</feature>
<sequence length="82" mass="9941">MFEKVNRSGLIIYLYYNRDAKKLQDYGDITYHSKKHRYLQLYVPTQEVEQLVGRLSKEKFIKKVRVCHIQELETPFVGNLYR</sequence>
<comment type="subcellular location">
    <subcellularLocation>
        <location evidence="1">Cytoplasm</location>
    </subcellularLocation>
</comment>
<comment type="similarity">
    <text evidence="1">Belongs to the UPF0298 family.</text>
</comment>